<dbReference type="EMBL" id="X65611">
    <property type="protein sequence ID" value="CAA46562.1"/>
    <property type="molecule type" value="Genomic_DNA"/>
</dbReference>
<dbReference type="EMBL" id="X56534">
    <property type="protein sequence ID" value="CAA39879.1"/>
    <property type="molecule type" value="Genomic_DNA"/>
</dbReference>
<dbReference type="PIR" id="JN0517">
    <property type="entry name" value="JN0517"/>
</dbReference>
<dbReference type="PDB" id="3DDY">
    <property type="method" value="X-ray"/>
    <property type="resolution" value="2.50 A"/>
    <property type="chains" value="A=1-186"/>
</dbReference>
<dbReference type="PDBsum" id="3DDY"/>
<dbReference type="SMR" id="Q06877"/>
<dbReference type="STRING" id="553611.GCA_001557755_01584"/>
<dbReference type="EvolutionaryTrace" id="Q06877"/>
<dbReference type="GO" id="GO:0004746">
    <property type="term" value="F:riboflavin synthase activity"/>
    <property type="evidence" value="ECO:0007669"/>
    <property type="project" value="TreeGrafter"/>
</dbReference>
<dbReference type="GO" id="GO:0008218">
    <property type="term" value="P:bioluminescence"/>
    <property type="evidence" value="ECO:0007669"/>
    <property type="project" value="UniProtKB-KW"/>
</dbReference>
<dbReference type="GO" id="GO:0009231">
    <property type="term" value="P:riboflavin biosynthetic process"/>
    <property type="evidence" value="ECO:0007669"/>
    <property type="project" value="TreeGrafter"/>
</dbReference>
<dbReference type="CDD" id="cd16256">
    <property type="entry name" value="LumP"/>
    <property type="match status" value="1"/>
</dbReference>
<dbReference type="Gene3D" id="2.40.30.20">
    <property type="match status" value="2"/>
</dbReference>
<dbReference type="InterPro" id="IPR023366">
    <property type="entry name" value="ATP_synth_asu-like_sf"/>
</dbReference>
<dbReference type="InterPro" id="IPR001783">
    <property type="entry name" value="Lumazine-bd"/>
</dbReference>
<dbReference type="InterPro" id="IPR026017">
    <property type="entry name" value="Lumazine-bd_dom"/>
</dbReference>
<dbReference type="InterPro" id="IPR017938">
    <property type="entry name" value="Riboflavin_synthase-like_b-brl"/>
</dbReference>
<dbReference type="PANTHER" id="PTHR21098:SF0">
    <property type="entry name" value="RIBOFLAVIN SYNTHASE"/>
    <property type="match status" value="1"/>
</dbReference>
<dbReference type="PANTHER" id="PTHR21098">
    <property type="entry name" value="RIBOFLAVIN SYNTHASE ALPHA CHAIN"/>
    <property type="match status" value="1"/>
</dbReference>
<dbReference type="Pfam" id="PF00677">
    <property type="entry name" value="Lum_binding"/>
    <property type="match status" value="2"/>
</dbReference>
<dbReference type="PIRSF" id="PIRSF000498">
    <property type="entry name" value="Riboflavin_syn_A"/>
    <property type="match status" value="1"/>
</dbReference>
<dbReference type="SUPFAM" id="SSF63380">
    <property type="entry name" value="Riboflavin synthase domain-like"/>
    <property type="match status" value="2"/>
</dbReference>
<dbReference type="PROSITE" id="PS51177">
    <property type="entry name" value="LUMAZINE_BIND"/>
    <property type="match status" value="2"/>
</dbReference>
<feature type="chain" id="PRO_0000068153" description="Lumazine protein">
    <location>
        <begin position="1"/>
        <end position="186"/>
    </location>
</feature>
<feature type="repeat" description="Lumazine-binding 1">
    <location>
        <begin position="1"/>
        <end position="96"/>
    </location>
</feature>
<feature type="repeat" description="Lumazine-binding 2">
    <location>
        <begin position="97"/>
        <end position="186"/>
    </location>
</feature>
<feature type="sequence conflict" description="In Ref. 2; CAA39879." evidence="1" ref="2">
    <original>G</original>
    <variation>C</variation>
    <location>
        <position position="94"/>
    </location>
</feature>
<feature type="strand" evidence="2">
    <location>
        <begin position="8"/>
        <end position="17"/>
    </location>
</feature>
<feature type="strand" evidence="2">
    <location>
        <begin position="22"/>
        <end position="27"/>
    </location>
</feature>
<feature type="turn" evidence="2">
    <location>
        <begin position="30"/>
        <end position="32"/>
    </location>
</feature>
<feature type="helix" evidence="2">
    <location>
        <begin position="33"/>
        <end position="35"/>
    </location>
</feature>
<feature type="strand" evidence="2">
    <location>
        <begin position="41"/>
        <end position="44"/>
    </location>
</feature>
<feature type="strand" evidence="2">
    <location>
        <begin position="47"/>
        <end position="55"/>
    </location>
</feature>
<feature type="strand" evidence="2">
    <location>
        <begin position="58"/>
        <end position="63"/>
    </location>
</feature>
<feature type="turn" evidence="2">
    <location>
        <begin position="65"/>
        <end position="69"/>
    </location>
</feature>
<feature type="helix" evidence="2">
    <location>
        <begin position="72"/>
        <end position="74"/>
    </location>
</feature>
<feature type="strand" evidence="2">
    <location>
        <begin position="80"/>
        <end position="84"/>
    </location>
</feature>
<feature type="strand" evidence="2">
    <location>
        <begin position="104"/>
        <end position="112"/>
    </location>
</feature>
<feature type="strand" evidence="2">
    <location>
        <begin position="115"/>
        <end position="123"/>
    </location>
</feature>
<feature type="turn" evidence="2">
    <location>
        <begin position="126"/>
        <end position="128"/>
    </location>
</feature>
<feature type="strand" evidence="2">
    <location>
        <begin position="137"/>
        <end position="140"/>
    </location>
</feature>
<feature type="strand" evidence="2">
    <location>
        <begin position="143"/>
        <end position="146"/>
    </location>
</feature>
<feature type="strand" evidence="2">
    <location>
        <begin position="149"/>
        <end position="151"/>
    </location>
</feature>
<feature type="strand" evidence="2">
    <location>
        <begin position="154"/>
        <end position="160"/>
    </location>
</feature>
<feature type="helix" evidence="2">
    <location>
        <begin position="161"/>
        <end position="165"/>
    </location>
</feature>
<feature type="helix" evidence="2">
    <location>
        <begin position="169"/>
        <end position="171"/>
    </location>
</feature>
<feature type="strand" evidence="2">
    <location>
        <begin position="177"/>
        <end position="182"/>
    </location>
</feature>
<keyword id="KW-0002">3D-structure</keyword>
<keyword id="KW-0455">Luminescence</keyword>
<keyword id="KW-0677">Repeat</keyword>
<accession>Q06877</accession>
<accession>Q51877</accession>
<protein>
    <recommendedName>
        <fullName>Lumazine protein</fullName>
        <shortName>LUMP</shortName>
    </recommendedName>
</protein>
<organism>
    <name type="scientific">Photobacterium leiognathi</name>
    <dbReference type="NCBI Taxonomy" id="553611"/>
    <lineage>
        <taxon>Bacteria</taxon>
        <taxon>Pseudomonadati</taxon>
        <taxon>Pseudomonadota</taxon>
        <taxon>Gammaproteobacteria</taxon>
        <taxon>Vibrionales</taxon>
        <taxon>Vibrionaceae</taxon>
        <taxon>Photobacterium</taxon>
    </lineage>
</organism>
<name>LUXP_PHOLE</name>
<sequence>MFRGIVQGRGVIRSISKSEDSQRHGIAFPEGMFQLVDVDTVMLVNGCSLTVVRILGDMVYFDIDQALGTTTFDGLKEGDQVNLEIHPKFGEVVGRGGLTGNIKGTALVAAIEENDAGFSVLIDIPKGLAENLTVKDDIGIDGISLPITDMSDSIITLNYSRDLLASTNIASLAKDVKVNVEILNEW</sequence>
<reference key="1">
    <citation type="journal article" date="1993" name="Gene">
        <title>The lumazine protein-encoding gene in Photobacterium leiognathi is linked to the lux operon.</title>
        <authorList>
            <person name="Lin J.-W."/>
            <person name="Chao Y.-F."/>
            <person name="Weng S.-F."/>
        </authorList>
    </citation>
    <scope>NUCLEOTIDE SEQUENCE [GENOMIC DNA]</scope>
    <source>
        <strain>741</strain>
    </source>
</reference>
<reference key="2">
    <citation type="submission" date="1991-12" db="EMBL/GenBank/DDBJ databases">
        <authorList>
            <person name="Illarionov B.A."/>
        </authorList>
    </citation>
    <scope>NUCLEOTIDE SEQUENCE [GENOMIC DNA]</scope>
    <source>
        <strain>554</strain>
    </source>
</reference>
<gene>
    <name type="primary">lumP</name>
</gene>
<proteinExistence type="evidence at protein level"/>
<comment type="function">
    <text>Antenna protein that modulates the color of the bioluminescence emission of the luciferase. In the presence of LumP, luciferase emission is shifted to higher energy values (shorter wavelength).</text>
</comment>
<comment type="cofactor">
    <cofactor>
        <name>6,7-dimethyl-8-(1-D-ribityl)lumazine</name>
        <dbReference type="ChEBI" id="CHEBI:58201"/>
    </cofactor>
    <text>Binds 1 6,7-dimethyl-8-(1'-D-ribityl)lumazine non-covalently.</text>
</comment>
<evidence type="ECO:0000305" key="1"/>
<evidence type="ECO:0007829" key="2">
    <source>
        <dbReference type="PDB" id="3DDY"/>
    </source>
</evidence>